<reference evidence="10" key="1">
    <citation type="journal article" date="1999" name="Hum. Mol. Genet.">
        <title>New gene family defined by MORC, a nuclear protein required for mouse spermatogenesis.</title>
        <authorList>
            <person name="Inoue N."/>
            <person name="Hess K.D."/>
            <person name="Moreadith R.W."/>
            <person name="Richardson L.L."/>
            <person name="Handel M.A."/>
            <person name="Watson M.L."/>
            <person name="Zinn A.R."/>
        </authorList>
    </citation>
    <scope>NUCLEOTIDE SEQUENCE [MRNA] (ISOFORM 1)</scope>
    <scope>VARIANTS ILE-470 AND TYR-836</scope>
</reference>
<reference key="2">
    <citation type="journal article" date="2004" name="Nat. Genet.">
        <title>Complete sequencing and characterization of 21,243 full-length human cDNAs.</title>
        <authorList>
            <person name="Ota T."/>
            <person name="Suzuki Y."/>
            <person name="Nishikawa T."/>
            <person name="Otsuki T."/>
            <person name="Sugiyama T."/>
            <person name="Irie R."/>
            <person name="Wakamatsu A."/>
            <person name="Hayashi K."/>
            <person name="Sato H."/>
            <person name="Nagai K."/>
            <person name="Kimura K."/>
            <person name="Makita H."/>
            <person name="Sekine M."/>
            <person name="Obayashi M."/>
            <person name="Nishi T."/>
            <person name="Shibahara T."/>
            <person name="Tanaka T."/>
            <person name="Ishii S."/>
            <person name="Yamamoto J."/>
            <person name="Saito K."/>
            <person name="Kawai Y."/>
            <person name="Isono Y."/>
            <person name="Nakamura Y."/>
            <person name="Nagahari K."/>
            <person name="Murakami K."/>
            <person name="Yasuda T."/>
            <person name="Iwayanagi T."/>
            <person name="Wagatsuma M."/>
            <person name="Shiratori A."/>
            <person name="Sudo H."/>
            <person name="Hosoiri T."/>
            <person name="Kaku Y."/>
            <person name="Kodaira H."/>
            <person name="Kondo H."/>
            <person name="Sugawara M."/>
            <person name="Takahashi M."/>
            <person name="Kanda K."/>
            <person name="Yokoi T."/>
            <person name="Furuya T."/>
            <person name="Kikkawa E."/>
            <person name="Omura Y."/>
            <person name="Abe K."/>
            <person name="Kamihara K."/>
            <person name="Katsuta N."/>
            <person name="Sato K."/>
            <person name="Tanikawa M."/>
            <person name="Yamazaki M."/>
            <person name="Ninomiya K."/>
            <person name="Ishibashi T."/>
            <person name="Yamashita H."/>
            <person name="Murakawa K."/>
            <person name="Fujimori K."/>
            <person name="Tanai H."/>
            <person name="Kimata M."/>
            <person name="Watanabe M."/>
            <person name="Hiraoka S."/>
            <person name="Chiba Y."/>
            <person name="Ishida S."/>
            <person name="Ono Y."/>
            <person name="Takiguchi S."/>
            <person name="Watanabe S."/>
            <person name="Yosida M."/>
            <person name="Hotuta T."/>
            <person name="Kusano J."/>
            <person name="Kanehori K."/>
            <person name="Takahashi-Fujii A."/>
            <person name="Hara H."/>
            <person name="Tanase T.-O."/>
            <person name="Nomura Y."/>
            <person name="Togiya S."/>
            <person name="Komai F."/>
            <person name="Hara R."/>
            <person name="Takeuchi K."/>
            <person name="Arita M."/>
            <person name="Imose N."/>
            <person name="Musashino K."/>
            <person name="Yuuki H."/>
            <person name="Oshima A."/>
            <person name="Sasaki N."/>
            <person name="Aotsuka S."/>
            <person name="Yoshikawa Y."/>
            <person name="Matsunawa H."/>
            <person name="Ichihara T."/>
            <person name="Shiohata N."/>
            <person name="Sano S."/>
            <person name="Moriya S."/>
            <person name="Momiyama H."/>
            <person name="Satoh N."/>
            <person name="Takami S."/>
            <person name="Terashima Y."/>
            <person name="Suzuki O."/>
            <person name="Nakagawa S."/>
            <person name="Senoh A."/>
            <person name="Mizoguchi H."/>
            <person name="Goto Y."/>
            <person name="Shimizu F."/>
            <person name="Wakebe H."/>
            <person name="Hishigaki H."/>
            <person name="Watanabe T."/>
            <person name="Sugiyama A."/>
            <person name="Takemoto M."/>
            <person name="Kawakami B."/>
            <person name="Yamazaki M."/>
            <person name="Watanabe K."/>
            <person name="Kumagai A."/>
            <person name="Itakura S."/>
            <person name="Fukuzumi Y."/>
            <person name="Fujimori Y."/>
            <person name="Komiyama M."/>
            <person name="Tashiro H."/>
            <person name="Tanigami A."/>
            <person name="Fujiwara T."/>
            <person name="Ono T."/>
            <person name="Yamada K."/>
            <person name="Fujii Y."/>
            <person name="Ozaki K."/>
            <person name="Hirao M."/>
            <person name="Ohmori Y."/>
            <person name="Kawabata A."/>
            <person name="Hikiji T."/>
            <person name="Kobatake N."/>
            <person name="Inagaki H."/>
            <person name="Ikema Y."/>
            <person name="Okamoto S."/>
            <person name="Okitani R."/>
            <person name="Kawakami T."/>
            <person name="Noguchi S."/>
            <person name="Itoh T."/>
            <person name="Shigeta K."/>
            <person name="Senba T."/>
            <person name="Matsumura K."/>
            <person name="Nakajima Y."/>
            <person name="Mizuno T."/>
            <person name="Morinaga M."/>
            <person name="Sasaki M."/>
            <person name="Togashi T."/>
            <person name="Oyama M."/>
            <person name="Hata H."/>
            <person name="Watanabe M."/>
            <person name="Komatsu T."/>
            <person name="Mizushima-Sugano J."/>
            <person name="Satoh T."/>
            <person name="Shirai Y."/>
            <person name="Takahashi Y."/>
            <person name="Nakagawa K."/>
            <person name="Okumura K."/>
            <person name="Nagase T."/>
            <person name="Nomura N."/>
            <person name="Kikuchi H."/>
            <person name="Masuho Y."/>
            <person name="Yamashita R."/>
            <person name="Nakai K."/>
            <person name="Yada T."/>
            <person name="Nakamura Y."/>
            <person name="Ohara O."/>
            <person name="Isogai T."/>
            <person name="Sugano S."/>
        </authorList>
    </citation>
    <scope>NUCLEOTIDE SEQUENCE [LARGE SCALE MRNA] (ISOFORM 2)</scope>
    <scope>VARIANTS ILE-470 AND TYR-836</scope>
    <source>
        <tissue>Testis</tissue>
    </source>
</reference>
<reference key="3">
    <citation type="journal article" date="2006" name="Nature">
        <title>The DNA sequence, annotation and analysis of human chromosome 3.</title>
        <authorList>
            <person name="Muzny D.M."/>
            <person name="Scherer S.E."/>
            <person name="Kaul R."/>
            <person name="Wang J."/>
            <person name="Yu J."/>
            <person name="Sudbrak R."/>
            <person name="Buhay C.J."/>
            <person name="Chen R."/>
            <person name="Cree A."/>
            <person name="Ding Y."/>
            <person name="Dugan-Rocha S."/>
            <person name="Gill R."/>
            <person name="Gunaratne P."/>
            <person name="Harris R.A."/>
            <person name="Hawes A.C."/>
            <person name="Hernandez J."/>
            <person name="Hodgson A.V."/>
            <person name="Hume J."/>
            <person name="Jackson A."/>
            <person name="Khan Z.M."/>
            <person name="Kovar-Smith C."/>
            <person name="Lewis L.R."/>
            <person name="Lozado R.J."/>
            <person name="Metzker M.L."/>
            <person name="Milosavljevic A."/>
            <person name="Miner G.R."/>
            <person name="Morgan M.B."/>
            <person name="Nazareth L.V."/>
            <person name="Scott G."/>
            <person name="Sodergren E."/>
            <person name="Song X.-Z."/>
            <person name="Steffen D."/>
            <person name="Wei S."/>
            <person name="Wheeler D.A."/>
            <person name="Wright M.W."/>
            <person name="Worley K.C."/>
            <person name="Yuan Y."/>
            <person name="Zhang Z."/>
            <person name="Adams C.Q."/>
            <person name="Ansari-Lari M.A."/>
            <person name="Ayele M."/>
            <person name="Brown M.J."/>
            <person name="Chen G."/>
            <person name="Chen Z."/>
            <person name="Clendenning J."/>
            <person name="Clerc-Blankenburg K.P."/>
            <person name="Chen R."/>
            <person name="Chen Z."/>
            <person name="Davis C."/>
            <person name="Delgado O."/>
            <person name="Dinh H.H."/>
            <person name="Dong W."/>
            <person name="Draper H."/>
            <person name="Ernst S."/>
            <person name="Fu G."/>
            <person name="Gonzalez-Garay M.L."/>
            <person name="Garcia D.K."/>
            <person name="Gillett W."/>
            <person name="Gu J."/>
            <person name="Hao B."/>
            <person name="Haugen E."/>
            <person name="Havlak P."/>
            <person name="He X."/>
            <person name="Hennig S."/>
            <person name="Hu S."/>
            <person name="Huang W."/>
            <person name="Jackson L.R."/>
            <person name="Jacob L.S."/>
            <person name="Kelly S.H."/>
            <person name="Kube M."/>
            <person name="Levy R."/>
            <person name="Li Z."/>
            <person name="Liu B."/>
            <person name="Liu J."/>
            <person name="Liu W."/>
            <person name="Lu J."/>
            <person name="Maheshwari M."/>
            <person name="Nguyen B.-V."/>
            <person name="Okwuonu G.O."/>
            <person name="Palmeiri A."/>
            <person name="Pasternak S."/>
            <person name="Perez L.M."/>
            <person name="Phelps K.A."/>
            <person name="Plopper F.J."/>
            <person name="Qiang B."/>
            <person name="Raymond C."/>
            <person name="Rodriguez R."/>
            <person name="Saenphimmachak C."/>
            <person name="Santibanez J."/>
            <person name="Shen H."/>
            <person name="Shen Y."/>
            <person name="Subramanian S."/>
            <person name="Tabor P.E."/>
            <person name="Verduzco D."/>
            <person name="Waldron L."/>
            <person name="Wang J."/>
            <person name="Wang J."/>
            <person name="Wang Q."/>
            <person name="Williams G.A."/>
            <person name="Wong G.K.-S."/>
            <person name="Yao Z."/>
            <person name="Zhang J."/>
            <person name="Zhang X."/>
            <person name="Zhao G."/>
            <person name="Zhou J."/>
            <person name="Zhou Y."/>
            <person name="Nelson D."/>
            <person name="Lehrach H."/>
            <person name="Reinhardt R."/>
            <person name="Naylor S.L."/>
            <person name="Yang H."/>
            <person name="Olson M."/>
            <person name="Weinstock G."/>
            <person name="Gibbs R.A."/>
        </authorList>
    </citation>
    <scope>NUCLEOTIDE SEQUENCE [LARGE SCALE GENOMIC DNA]</scope>
</reference>
<reference evidence="11" key="4">
    <citation type="journal article" date="2004" name="Genome Res.">
        <title>The status, quality, and expansion of the NIH full-length cDNA project: the Mammalian Gene Collection (MGC).</title>
        <authorList>
            <consortium name="The MGC Project Team"/>
        </authorList>
    </citation>
    <scope>NUCLEOTIDE SEQUENCE [LARGE SCALE MRNA] (ISOFORM 1)</scope>
    <scope>VARIANT ILE-470</scope>
    <source>
        <tissue evidence="11">Testis</tissue>
    </source>
</reference>
<reference key="5">
    <citation type="journal article" date="2007" name="BMC Genomics">
        <title>The full-ORF clone resource of the German cDNA consortium.</title>
        <authorList>
            <person name="Bechtel S."/>
            <person name="Rosenfelder H."/>
            <person name="Duda A."/>
            <person name="Schmidt C.P."/>
            <person name="Ernst U."/>
            <person name="Wellenreuther R."/>
            <person name="Mehrle A."/>
            <person name="Schuster C."/>
            <person name="Bahr A."/>
            <person name="Bloecker H."/>
            <person name="Heubner D."/>
            <person name="Hoerlein A."/>
            <person name="Michel G."/>
            <person name="Wedler H."/>
            <person name="Koehrer K."/>
            <person name="Ottenwaelder B."/>
            <person name="Poustka A."/>
            <person name="Wiemann S."/>
            <person name="Schupp I."/>
        </authorList>
    </citation>
    <scope>NUCLEOTIDE SEQUENCE [LARGE SCALE MRNA] OF 186-984 (ISOFORM 1)</scope>
    <scope>VARIANTS ILE-470 AND TYR-836</scope>
    <source>
        <tissue>Testis</tissue>
    </source>
</reference>
<keyword id="KW-0025">Alternative splicing</keyword>
<keyword id="KW-0175">Coiled coil</keyword>
<keyword id="KW-0217">Developmental protein</keyword>
<keyword id="KW-0221">Differentiation</keyword>
<keyword id="KW-0479">Metal-binding</keyword>
<keyword id="KW-0539">Nucleus</keyword>
<keyword id="KW-1267">Proteomics identification</keyword>
<keyword id="KW-1185">Reference proteome</keyword>
<keyword id="KW-0943">RNA-mediated gene silencing</keyword>
<keyword id="KW-0744">Spermatogenesis</keyword>
<keyword id="KW-0862">Zinc</keyword>
<keyword id="KW-0863">Zinc-finger</keyword>
<evidence type="ECO:0000250" key="1">
    <source>
        <dbReference type="UniProtKB" id="Q9WVL5"/>
    </source>
</evidence>
<evidence type="ECO:0000255" key="2"/>
<evidence type="ECO:0000255" key="3">
    <source>
        <dbReference type="PROSITE-ProRule" id="PRU00454"/>
    </source>
</evidence>
<evidence type="ECO:0000269" key="4">
    <source>
    </source>
</evidence>
<evidence type="ECO:0000269" key="5">
    <source>
    </source>
</evidence>
<evidence type="ECO:0000269" key="6">
    <source>
    </source>
</evidence>
<evidence type="ECO:0000269" key="7">
    <source>
    </source>
</evidence>
<evidence type="ECO:0000303" key="8">
    <source>
    </source>
</evidence>
<evidence type="ECO:0000305" key="9"/>
<evidence type="ECO:0000312" key="10">
    <source>
        <dbReference type="EMBL" id="AAD43004.1"/>
    </source>
</evidence>
<evidence type="ECO:0000312" key="11">
    <source>
        <dbReference type="EMBL" id="AAH50307.1"/>
    </source>
</evidence>
<dbReference type="EMBL" id="AF084946">
    <property type="protein sequence ID" value="AAD43004.1"/>
    <property type="molecule type" value="mRNA"/>
</dbReference>
<dbReference type="EMBL" id="AK302642">
    <property type="protein sequence ID" value="BAG63883.1"/>
    <property type="molecule type" value="mRNA"/>
</dbReference>
<dbReference type="EMBL" id="AC016948">
    <property type="status" value="NOT_ANNOTATED_CDS"/>
    <property type="molecule type" value="Genomic_DNA"/>
</dbReference>
<dbReference type="EMBL" id="AC112138">
    <property type="status" value="NOT_ANNOTATED_CDS"/>
    <property type="molecule type" value="Genomic_DNA"/>
</dbReference>
<dbReference type="EMBL" id="BC050307">
    <property type="protein sequence ID" value="AAH50307.1"/>
    <property type="molecule type" value="mRNA"/>
</dbReference>
<dbReference type="EMBL" id="AL353955">
    <property type="protein sequence ID" value="CAB89255.1"/>
    <property type="molecule type" value="mRNA"/>
</dbReference>
<dbReference type="CCDS" id="CCDS2955.1">
    <molecule id="Q86VD1-1"/>
</dbReference>
<dbReference type="PIR" id="T48690">
    <property type="entry name" value="T48690"/>
</dbReference>
<dbReference type="RefSeq" id="NP_055244.3">
    <molecule id="Q86VD1-1"/>
    <property type="nucleotide sequence ID" value="NM_014429.4"/>
</dbReference>
<dbReference type="SMR" id="Q86VD1"/>
<dbReference type="BioGRID" id="118026">
    <property type="interactions" value="14"/>
</dbReference>
<dbReference type="FunCoup" id="Q86VD1">
    <property type="interactions" value="208"/>
</dbReference>
<dbReference type="IntAct" id="Q86VD1">
    <property type="interactions" value="7"/>
</dbReference>
<dbReference type="STRING" id="9606.ENSP00000232603"/>
<dbReference type="GlyGen" id="Q86VD1">
    <property type="glycosylation" value="1 site, 1 O-linked glycan (1 site)"/>
</dbReference>
<dbReference type="iPTMnet" id="Q86VD1"/>
<dbReference type="PhosphoSitePlus" id="Q86VD1"/>
<dbReference type="BioMuta" id="MORC1"/>
<dbReference type="DMDM" id="269849621"/>
<dbReference type="jPOST" id="Q86VD1"/>
<dbReference type="MassIVE" id="Q86VD1"/>
<dbReference type="PaxDb" id="9606-ENSP00000232603"/>
<dbReference type="PeptideAtlas" id="Q86VD1"/>
<dbReference type="ProteomicsDB" id="17870"/>
<dbReference type="ProteomicsDB" id="69986">
    <molecule id="Q86VD1-1"/>
</dbReference>
<dbReference type="Antibodypedia" id="32406">
    <property type="antibodies" value="123 antibodies from 18 providers"/>
</dbReference>
<dbReference type="DNASU" id="27136"/>
<dbReference type="Ensembl" id="ENST00000232603.10">
    <molecule id="Q86VD1-1"/>
    <property type="protein sequence ID" value="ENSP00000232603.5"/>
    <property type="gene ID" value="ENSG00000114487.10"/>
</dbReference>
<dbReference type="Ensembl" id="ENST00000483760.1">
    <molecule id="Q86VD1-2"/>
    <property type="protein sequence ID" value="ENSP00000417282.1"/>
    <property type="gene ID" value="ENSG00000114487.10"/>
</dbReference>
<dbReference type="GeneID" id="27136"/>
<dbReference type="KEGG" id="hsa:27136"/>
<dbReference type="MANE-Select" id="ENST00000232603.10">
    <property type="protein sequence ID" value="ENSP00000232603.5"/>
    <property type="RefSeq nucleotide sequence ID" value="NM_014429.4"/>
    <property type="RefSeq protein sequence ID" value="NP_055244.3"/>
</dbReference>
<dbReference type="UCSC" id="uc003dxl.4">
    <molecule id="Q86VD1-1"/>
    <property type="organism name" value="human"/>
</dbReference>
<dbReference type="AGR" id="HGNC:7198"/>
<dbReference type="CTD" id="27136"/>
<dbReference type="DisGeNET" id="27136"/>
<dbReference type="GeneCards" id="MORC1"/>
<dbReference type="HGNC" id="HGNC:7198">
    <property type="gene designation" value="MORC1"/>
</dbReference>
<dbReference type="HPA" id="ENSG00000114487">
    <property type="expression patterns" value="Tissue enriched (testis)"/>
</dbReference>
<dbReference type="MIM" id="603205">
    <property type="type" value="gene"/>
</dbReference>
<dbReference type="neXtProt" id="NX_Q86VD1"/>
<dbReference type="OpenTargets" id="ENSG00000114487"/>
<dbReference type="PharmGKB" id="PA30906"/>
<dbReference type="VEuPathDB" id="HostDB:ENSG00000114487"/>
<dbReference type="eggNOG" id="KOG1845">
    <property type="taxonomic scope" value="Eukaryota"/>
</dbReference>
<dbReference type="GeneTree" id="ENSGT00940000153998"/>
<dbReference type="HOGENOM" id="CLU_011516_0_1_1"/>
<dbReference type="InParanoid" id="Q86VD1"/>
<dbReference type="OMA" id="LDIWICA"/>
<dbReference type="OrthoDB" id="10251809at2759"/>
<dbReference type="PAN-GO" id="Q86VD1">
    <property type="GO annotations" value="1 GO annotation based on evolutionary models"/>
</dbReference>
<dbReference type="PhylomeDB" id="Q86VD1"/>
<dbReference type="TreeFam" id="TF329118"/>
<dbReference type="PathwayCommons" id="Q86VD1"/>
<dbReference type="SignaLink" id="Q86VD1"/>
<dbReference type="BioGRID-ORCS" id="27136">
    <property type="hits" value="14 hits in 1141 CRISPR screens"/>
</dbReference>
<dbReference type="ChiTaRS" id="MORC1">
    <property type="organism name" value="human"/>
</dbReference>
<dbReference type="GenomeRNAi" id="27136"/>
<dbReference type="Pharos" id="Q86VD1">
    <property type="development level" value="Tbio"/>
</dbReference>
<dbReference type="PRO" id="PR:Q86VD1"/>
<dbReference type="Proteomes" id="UP000005640">
    <property type="component" value="Chromosome 3"/>
</dbReference>
<dbReference type="RNAct" id="Q86VD1">
    <property type="molecule type" value="protein"/>
</dbReference>
<dbReference type="Bgee" id="ENSG00000114487">
    <property type="expression patterns" value="Expressed in male germ line stem cell (sensu Vertebrata) in testis and 31 other cell types or tissues"/>
</dbReference>
<dbReference type="GO" id="GO:0001673">
    <property type="term" value="C:male germ cell nucleus"/>
    <property type="evidence" value="ECO:0007669"/>
    <property type="project" value="Ensembl"/>
</dbReference>
<dbReference type="GO" id="GO:0005634">
    <property type="term" value="C:nucleus"/>
    <property type="evidence" value="ECO:0000318"/>
    <property type="project" value="GO_Central"/>
</dbReference>
<dbReference type="GO" id="GO:0008270">
    <property type="term" value="F:zinc ion binding"/>
    <property type="evidence" value="ECO:0007669"/>
    <property type="project" value="UniProtKB-KW"/>
</dbReference>
<dbReference type="GO" id="GO:0001662">
    <property type="term" value="P:behavioral fear response"/>
    <property type="evidence" value="ECO:0007669"/>
    <property type="project" value="Ensembl"/>
</dbReference>
<dbReference type="GO" id="GO:0030154">
    <property type="term" value="P:cell differentiation"/>
    <property type="evidence" value="ECO:0007669"/>
    <property type="project" value="UniProtKB-KW"/>
</dbReference>
<dbReference type="GO" id="GO:0044727">
    <property type="term" value="P:epigenetic programing of male pronucleus"/>
    <property type="evidence" value="ECO:0007669"/>
    <property type="project" value="Ensembl"/>
</dbReference>
<dbReference type="GO" id="GO:2000143">
    <property type="term" value="P:negative regulation of DNA-templated transcription initiation"/>
    <property type="evidence" value="ECO:0007669"/>
    <property type="project" value="Ensembl"/>
</dbReference>
<dbReference type="GO" id="GO:0031047">
    <property type="term" value="P:regulatory ncRNA-mediated gene silencing"/>
    <property type="evidence" value="ECO:0007669"/>
    <property type="project" value="UniProtKB-KW"/>
</dbReference>
<dbReference type="GO" id="GO:0032197">
    <property type="term" value="P:retrotransposition"/>
    <property type="evidence" value="ECO:0007669"/>
    <property type="project" value="Ensembl"/>
</dbReference>
<dbReference type="GO" id="GO:0007283">
    <property type="term" value="P:spermatogenesis"/>
    <property type="evidence" value="ECO:0000304"/>
    <property type="project" value="ProtInc"/>
</dbReference>
<dbReference type="GO" id="GO:0141005">
    <property type="term" value="P:transposable element silencing by heterochromatin formation"/>
    <property type="evidence" value="ECO:0007669"/>
    <property type="project" value="Ensembl"/>
</dbReference>
<dbReference type="CDD" id="cd16931">
    <property type="entry name" value="HATPase_MORC-like"/>
    <property type="match status" value="1"/>
</dbReference>
<dbReference type="FunFam" id="3.30.40.100:FF:000004">
    <property type="entry name" value="MORC family CW-type zinc finger 1"/>
    <property type="match status" value="1"/>
</dbReference>
<dbReference type="FunFam" id="3.30.565.10:FF:000027">
    <property type="entry name" value="MORC family CW-type zinc finger protein 2"/>
    <property type="match status" value="1"/>
</dbReference>
<dbReference type="Gene3D" id="3.30.40.100">
    <property type="match status" value="1"/>
</dbReference>
<dbReference type="Gene3D" id="3.30.565.10">
    <property type="entry name" value="Histidine kinase-like ATPase, C-terminal domain"/>
    <property type="match status" value="1"/>
</dbReference>
<dbReference type="InterPro" id="IPR036890">
    <property type="entry name" value="HATPase_C_sf"/>
</dbReference>
<dbReference type="InterPro" id="IPR041006">
    <property type="entry name" value="Morc_S5"/>
</dbReference>
<dbReference type="InterPro" id="IPR011124">
    <property type="entry name" value="Znf_CW"/>
</dbReference>
<dbReference type="PANTHER" id="PTHR23337:SF6">
    <property type="entry name" value="MORC FAMILY CW-TYPE ZINC FINGER PROTEIN 1"/>
    <property type="match status" value="1"/>
</dbReference>
<dbReference type="PANTHER" id="PTHR23337">
    <property type="entry name" value="ZINC FINGER CW-TYPE COILED-COIL DOMAIN PROTEIN 1"/>
    <property type="match status" value="1"/>
</dbReference>
<dbReference type="Pfam" id="PF13589">
    <property type="entry name" value="HATPase_c_3"/>
    <property type="match status" value="1"/>
</dbReference>
<dbReference type="Pfam" id="PF17942">
    <property type="entry name" value="Morc6_S5"/>
    <property type="match status" value="1"/>
</dbReference>
<dbReference type="Pfam" id="PF07496">
    <property type="entry name" value="zf-CW"/>
    <property type="match status" value="1"/>
</dbReference>
<dbReference type="SUPFAM" id="SSF55874">
    <property type="entry name" value="ATPase domain of HSP90 chaperone/DNA topoisomerase II/histidine kinase"/>
    <property type="match status" value="1"/>
</dbReference>
<dbReference type="PROSITE" id="PS51050">
    <property type="entry name" value="ZF_CW"/>
    <property type="match status" value="1"/>
</dbReference>
<feature type="chain" id="PRO_0000248241" description="MORC family CW-type zinc finger protein 1">
    <location>
        <begin position="1"/>
        <end position="984"/>
    </location>
</feature>
<feature type="zinc finger region" description="CW-type" evidence="3">
    <location>
        <begin position="477"/>
        <end position="531"/>
    </location>
</feature>
<feature type="coiled-coil region" evidence="2">
    <location>
        <begin position="284"/>
        <end position="353"/>
    </location>
</feature>
<feature type="coiled-coil region" evidence="2">
    <location>
        <begin position="737"/>
        <end position="761"/>
    </location>
</feature>
<feature type="coiled-coil region" evidence="2">
    <location>
        <begin position="900"/>
        <end position="934"/>
    </location>
</feature>
<feature type="binding site" evidence="3">
    <location>
        <position position="486"/>
    </location>
    <ligand>
        <name>Zn(2+)</name>
        <dbReference type="ChEBI" id="CHEBI:29105"/>
    </ligand>
</feature>
<feature type="binding site" evidence="3">
    <location>
        <position position="489"/>
    </location>
    <ligand>
        <name>Zn(2+)</name>
        <dbReference type="ChEBI" id="CHEBI:29105"/>
    </ligand>
</feature>
<feature type="binding site" evidence="3">
    <location>
        <position position="512"/>
    </location>
    <ligand>
        <name>Zn(2+)</name>
        <dbReference type="ChEBI" id="CHEBI:29105"/>
    </ligand>
</feature>
<feature type="binding site" evidence="3">
    <location>
        <position position="523"/>
    </location>
    <ligand>
        <name>Zn(2+)</name>
        <dbReference type="ChEBI" id="CHEBI:29105"/>
    </ligand>
</feature>
<feature type="splice variant" id="VSP_055495" description="In isoform 2." evidence="8">
    <location>
        <begin position="569"/>
        <end position="589"/>
    </location>
</feature>
<feature type="sequence variant" id="VAR_051188" description="In dbSNP:rs35282274.">
    <original>T</original>
    <variation>P</variation>
    <location>
        <position position="153"/>
    </location>
</feature>
<feature type="sequence variant" id="VAR_051189" description="In dbSNP:rs17225637.">
    <original>K</original>
    <variation>M</variation>
    <location>
        <position position="322"/>
    </location>
</feature>
<feature type="sequence variant" id="VAR_059698" description="In dbSNP:rs3762696.">
    <original>D</original>
    <variation>E</variation>
    <location>
        <position position="462"/>
    </location>
</feature>
<feature type="sequence variant" id="VAR_051190" description="In dbSNP:rs4855576." evidence="4 5 6 7">
    <original>F</original>
    <variation>I</variation>
    <location>
        <position position="470"/>
    </location>
</feature>
<feature type="sequence variant" id="VAR_051191" description="In dbSNP:rs3762697.">
    <original>M</original>
    <variation>V</variation>
    <location>
        <position position="478"/>
    </location>
</feature>
<feature type="sequence variant" id="VAR_051192" description="In dbSNP:rs35421732.">
    <original>M</original>
    <variation>I</variation>
    <location>
        <position position="649"/>
    </location>
</feature>
<feature type="sequence variant" id="VAR_051193" description="In dbSNP:rs2290057.">
    <original>S</original>
    <variation>N</variation>
    <location>
        <position position="767"/>
    </location>
</feature>
<feature type="sequence variant" id="VAR_051194" description="In dbSNP:rs2593943." evidence="4 5 7">
    <original>H</original>
    <variation>Y</variation>
    <location>
        <position position="836"/>
    </location>
</feature>
<feature type="sequence variant" id="VAR_051195" description="In dbSNP:rs16855035.">
    <original>S</original>
    <variation>C</variation>
    <location>
        <position position="982"/>
    </location>
</feature>
<feature type="sequence variant" id="VAR_051196" description="In dbSNP:rs16855035.">
    <original>S</original>
    <variation>W</variation>
    <location>
        <position position="982"/>
    </location>
</feature>
<feature type="sequence conflict" description="In Ref. 2; BAG63883." evidence="9" ref="2">
    <original>F</original>
    <variation>C</variation>
    <location>
        <position position="65"/>
    </location>
</feature>
<feature type="sequence conflict" description="In Ref. 2; BAG63883." evidence="9" ref="2">
    <original>K</original>
    <variation>E</variation>
    <location>
        <position position="692"/>
    </location>
</feature>
<comment type="function">
    <text evidence="1">Required for spermatogenesis (By similarity). Essential for de novo DNA methylation and silencing of transposable elements in the male embryonic germ cells (By similarity).</text>
</comment>
<comment type="interaction">
    <interactant intactId="EBI-21786832">
        <id>Q86VD1</id>
    </interactant>
    <interactant intactId="EBI-11125700">
        <id>Q9Y6X9</id>
        <label>MORC2</label>
    </interactant>
    <organismsDiffer>false</organismsDiffer>
    <experiments>3</experiments>
</comment>
<comment type="subcellular location">
    <subcellularLocation>
        <location evidence="1">Nucleus</location>
    </subcellularLocation>
</comment>
<comment type="alternative products">
    <event type="alternative splicing"/>
    <isoform>
        <id>Q86VD1-1</id>
        <name>1</name>
        <sequence type="displayed"/>
    </isoform>
    <isoform>
        <id>Q86VD1-2</id>
        <name>2</name>
        <sequence type="described" ref="VSP_055495"/>
    </isoform>
</comment>
<organism>
    <name type="scientific">Homo sapiens</name>
    <name type="common">Human</name>
    <dbReference type="NCBI Taxonomy" id="9606"/>
    <lineage>
        <taxon>Eukaryota</taxon>
        <taxon>Metazoa</taxon>
        <taxon>Chordata</taxon>
        <taxon>Craniata</taxon>
        <taxon>Vertebrata</taxon>
        <taxon>Euteleostomi</taxon>
        <taxon>Mammalia</taxon>
        <taxon>Eutheria</taxon>
        <taxon>Euarchontoglires</taxon>
        <taxon>Primates</taxon>
        <taxon>Haplorrhini</taxon>
        <taxon>Catarrhini</taxon>
        <taxon>Hominidae</taxon>
        <taxon>Homo</taxon>
    </lineage>
</organism>
<gene>
    <name evidence="11" type="primary">MORC1</name>
    <name evidence="10" type="synonym">MORC</name>
</gene>
<proteinExistence type="evidence at protein level"/>
<protein>
    <recommendedName>
        <fullName>MORC family CW-type zinc finger protein 1</fullName>
    </recommendedName>
    <alternativeName>
        <fullName>Cancer/testis antigen 33</fullName>
        <shortName>CT33</shortName>
    </alternativeName>
</protein>
<name>MORC1_HUMAN</name>
<sequence length="984" mass="112881">MDDRYPALQRAQLRLDFIHANSTTHSFLFGALAELLDNARDAGAERLDVFSVDNEKLQGGFMLCFLDDGCGMSPEEASDIIYFGRSKKRLSTLKFIGQYGNGLKSGSMRIGKDFILFTKKEETMTCVFFSQTFCEEESLSEVVVPMPSWLIRTRESVTDDPQKFAMELSIIYKYSPFKTEAELMQQFDVIYGKCGTLLVIYNLKLLLNGEPELDVKTDKEDILMAGALEDFPARWSFRAYTSVLYFNPWMRIFIQAKRVKTKHLCYCLYRPRKYLYVTSSFKGAFKDEVKKAEEAVKIAESILKEAQIKVNQCDRTSLSSAKDVLQRALEDVEAKQKNLKEKQRELKTARTLSLFYGVNVENRSQAGMFIYSNNRLIKMHEKVGSQLKLKSLLGAGVVGIVNIPLEVMEPSHNKQEFLNVQEYNHLLKVMGQYLVQYCKDTGINNRNLTLFCNEFGYQNDIDVEKPLNSFQYQRRQAMGIPFIIQCDLCLKWRVLPSSTNYQEKEFFDIWICANNPNRLENSCHQVECLPSIPLGTMSTISPSKNEKEKQLRESVIKYQNRLAEQQPQPQFIPVDEITVTSTCLTSAHKENTKTQKIRLLGDDLKHESLSSFELSASRRGQKRNIEETDSDVEYISETKIMKKSMEEKMNSQQQRIPVALPENVKLAERSQRSQIANITTVWRAQPTEGCLKNAQAASWEMKRKQSLNFVEECKVLTEDENTSDSDIILVSDKSNTDVSLKQEKKEIPLLNQEKQELCNDVLAMKRSSSLPSWKSLLNVPMEDVNLSSGHIARVSVSGSCKVASSPASSQSTPVKETVRKLKSKLREILLYFFPEHQLPSELEEPALSCELEQCPEQMNKKLKMCFNQIQNTYMVQYEKKIKRKLQSIIYDSNTRGIHNEISLGQCENKRKISEDKLKNLRIKLALLLQKLQLGGPEGDLEQTDTYLEALLKEDNLLFQNNLNKVTIDARHRLPLEKNEKTSEN</sequence>
<accession>Q86VD1</accession>
<accession>B4DYX1</accession>
<accession>E7ERX1</accession>
<accession>Q7L8E2</accession>
<accession>Q9NSG7</accession>
<accession>Q9Y6D4</accession>